<dbReference type="EMBL" id="AAFI02000042">
    <property type="protein sequence ID" value="EAL66627.1"/>
    <property type="status" value="ALT_SEQ"/>
    <property type="molecule type" value="Genomic_DNA"/>
</dbReference>
<dbReference type="EMBL" id="AAFI02000042">
    <property type="protein sequence ID" value="EAL66628.1"/>
    <property type="status" value="ALT_SEQ"/>
    <property type="molecule type" value="Genomic_DNA"/>
</dbReference>
<dbReference type="RefSeq" id="XP_640608.1">
    <property type="nucleotide sequence ID" value="XM_635516.1"/>
</dbReference>
<dbReference type="RefSeq" id="XP_640609.1">
    <property type="nucleotide sequence ID" value="XM_635517.1"/>
</dbReference>
<dbReference type="SMR" id="Q54TI3"/>
<dbReference type="FunCoup" id="Q54TI3">
    <property type="interactions" value="161"/>
</dbReference>
<dbReference type="STRING" id="44689.Q54TI3"/>
<dbReference type="PaxDb" id="44689-DDB0204636"/>
<dbReference type="EnsemblProtists" id="EAL66627">
    <property type="protein sequence ID" value="EAL66627"/>
    <property type="gene ID" value="DDB_G0281731"/>
</dbReference>
<dbReference type="EnsemblProtists" id="EAL66628">
    <property type="protein sequence ID" value="EAL66628"/>
    <property type="gene ID" value="DDB_G0281733"/>
</dbReference>
<dbReference type="GeneID" id="8623219"/>
<dbReference type="KEGG" id="ddi:DDB_G0281731"/>
<dbReference type="KEGG" id="ddi:DDB_G0281733"/>
<dbReference type="dictyBase" id="DDB_G0281733"/>
<dbReference type="VEuPathDB" id="AmoebaDB:DDB_G0281731"/>
<dbReference type="VEuPathDB" id="AmoebaDB:DDB_G0281733"/>
<dbReference type="eggNOG" id="KOG0845">
    <property type="taxonomic scope" value="Eukaryota"/>
</dbReference>
<dbReference type="InParanoid" id="Q54TI3"/>
<dbReference type="PRO" id="PR:Q54TI3"/>
<dbReference type="Proteomes" id="UP000002195">
    <property type="component" value="Chromosome 3"/>
</dbReference>
<dbReference type="Gene3D" id="1.25.40.90">
    <property type="match status" value="1"/>
</dbReference>
<dbReference type="InterPro" id="IPR006569">
    <property type="entry name" value="CID_dom"/>
</dbReference>
<dbReference type="InterPro" id="IPR008942">
    <property type="entry name" value="ENTH_VHS"/>
</dbReference>
<dbReference type="InterPro" id="IPR052600">
    <property type="entry name" value="Nuc_rcpt_coact/corep"/>
</dbReference>
<dbReference type="PANTHER" id="PTHR23295:SF6">
    <property type="entry name" value="NEOSIN, ISOFORM A"/>
    <property type="match status" value="1"/>
</dbReference>
<dbReference type="PANTHER" id="PTHR23295">
    <property type="entry name" value="NUCLEAR RECEPTOR COACTIVATOR 5-RELATED"/>
    <property type="match status" value="1"/>
</dbReference>
<dbReference type="Pfam" id="PF04818">
    <property type="entry name" value="CID"/>
    <property type="match status" value="1"/>
</dbReference>
<dbReference type="SMART" id="SM00582">
    <property type="entry name" value="RPR"/>
    <property type="match status" value="1"/>
</dbReference>
<dbReference type="SUPFAM" id="SSF48464">
    <property type="entry name" value="ENTH/VHS domain"/>
    <property type="match status" value="1"/>
</dbReference>
<dbReference type="PROSITE" id="PS51391">
    <property type="entry name" value="CID"/>
    <property type="match status" value="1"/>
</dbReference>
<sequence>MDIFDSTITSFEDFPSERFKEQLESLTYESIERASQFVLENLPCIDDLFDVLLNRMRKSAYHKRLLFFNLIDCICIGCSRIENDVYKKFIINNVDEIIPLILPDDNLEVKKKNRETIERIIRSWSNNHVFNDTFISRAFSILSGVAKESRSICPNLSEKEIARLLKRMEEKRKDQNKKRLDLEDSHPLDEFLELWFNFNLDNSSSSSSSSSSSSSSSSTTTTTTTTSELSSISTSLNSIRTNSSCSNNNLQIDIEIIEKEKEKQKEHFNSFNDTSITTPSTSSSTTSSSSSSSSSSSSSSSSSSSSSSSSSSSSSSSSSSSSSSSSSSLDNSTTNDNNNNTSNNKNNNNDNYNNQSILEKERIYKLDYEVYDSFKSQFTIPEWPSYEIEDIDLFTSGNDGEYQDYIENEYNSFDQNSYLEYKKKYKNNEFENSIGNSNNYYNRNSSNNNNNNNNNNNNNNNNNNNNNNNNNNNNNNNEDSGNFMNSILNYCFYEHKNHFNFIKNNRNNHYPYNTSGYLNNRVDNYQPYSPKTTSDSHKLQEYFNKIDYMNKNGISVVDICAKSKSFEIPNICGADGGDSDRMDIDTNNSLKNENKQNDSHRGKSRKRRSSSRGESEHSRYYRDSSRDAKDRDSRDHRDNRDHRDSRDHRDRRDSRDHRDSRDYRDHRDSRDYRDSRDSRDSRDSRDRESRDSRDHRESRDSRDHRESRDSREYRESRDHRDHSRDSRDQYRDKDHRDSSDGRDHRNRDDKYQIDKRDNQHHNERNDSRNDRNDKNDKNDKNDKNDKNQEKYSERYHNERDSRDNEKDFYRSKETMVNNDNRSSSNRSSNRH</sequence>
<proteinExistence type="predicted"/>
<accession>Q54TI3</accession>
<accession>Q54TI2</accession>
<protein>
    <recommendedName>
        <fullName>Putative uncharacterized protein DDB_G0281733</fullName>
    </recommendedName>
</protein>
<comment type="sequence caution" evidence="3">
    <conflict type="erroneous gene model prediction">
        <sequence resource="EMBL-CDS" id="EAL66627"/>
    </conflict>
</comment>
<comment type="sequence caution" evidence="3">
    <conflict type="erroneous gene model prediction">
        <sequence resource="EMBL-CDS" id="EAL66628"/>
    </conflict>
</comment>
<gene>
    <name type="ORF">DDB_G0281733</name>
</gene>
<evidence type="ECO:0000255" key="1">
    <source>
        <dbReference type="PROSITE-ProRule" id="PRU00724"/>
    </source>
</evidence>
<evidence type="ECO:0000256" key="2">
    <source>
        <dbReference type="SAM" id="MobiDB-lite"/>
    </source>
</evidence>
<evidence type="ECO:0000305" key="3"/>
<organism>
    <name type="scientific">Dictyostelium discoideum</name>
    <name type="common">Social amoeba</name>
    <dbReference type="NCBI Taxonomy" id="44689"/>
    <lineage>
        <taxon>Eukaryota</taxon>
        <taxon>Amoebozoa</taxon>
        <taxon>Evosea</taxon>
        <taxon>Eumycetozoa</taxon>
        <taxon>Dictyostelia</taxon>
        <taxon>Dictyosteliales</taxon>
        <taxon>Dictyosteliaceae</taxon>
        <taxon>Dictyostelium</taxon>
    </lineage>
</organism>
<name>Y4636_DICDI</name>
<keyword id="KW-1185">Reference proteome</keyword>
<reference key="1">
    <citation type="journal article" date="2005" name="Nature">
        <title>The genome of the social amoeba Dictyostelium discoideum.</title>
        <authorList>
            <person name="Eichinger L."/>
            <person name="Pachebat J.A."/>
            <person name="Gloeckner G."/>
            <person name="Rajandream M.A."/>
            <person name="Sucgang R."/>
            <person name="Berriman M."/>
            <person name="Song J."/>
            <person name="Olsen R."/>
            <person name="Szafranski K."/>
            <person name="Xu Q."/>
            <person name="Tunggal B."/>
            <person name="Kummerfeld S."/>
            <person name="Madera M."/>
            <person name="Konfortov B.A."/>
            <person name="Rivero F."/>
            <person name="Bankier A.T."/>
            <person name="Lehmann R."/>
            <person name="Hamlin N."/>
            <person name="Davies R."/>
            <person name="Gaudet P."/>
            <person name="Fey P."/>
            <person name="Pilcher K."/>
            <person name="Chen G."/>
            <person name="Saunders D."/>
            <person name="Sodergren E.J."/>
            <person name="Davis P."/>
            <person name="Kerhornou A."/>
            <person name="Nie X."/>
            <person name="Hall N."/>
            <person name="Anjard C."/>
            <person name="Hemphill L."/>
            <person name="Bason N."/>
            <person name="Farbrother P."/>
            <person name="Desany B."/>
            <person name="Just E."/>
            <person name="Morio T."/>
            <person name="Rost R."/>
            <person name="Churcher C.M."/>
            <person name="Cooper J."/>
            <person name="Haydock S."/>
            <person name="van Driessche N."/>
            <person name="Cronin A."/>
            <person name="Goodhead I."/>
            <person name="Muzny D.M."/>
            <person name="Mourier T."/>
            <person name="Pain A."/>
            <person name="Lu M."/>
            <person name="Harper D."/>
            <person name="Lindsay R."/>
            <person name="Hauser H."/>
            <person name="James K.D."/>
            <person name="Quiles M."/>
            <person name="Madan Babu M."/>
            <person name="Saito T."/>
            <person name="Buchrieser C."/>
            <person name="Wardroper A."/>
            <person name="Felder M."/>
            <person name="Thangavelu M."/>
            <person name="Johnson D."/>
            <person name="Knights A."/>
            <person name="Loulseged H."/>
            <person name="Mungall K.L."/>
            <person name="Oliver K."/>
            <person name="Price C."/>
            <person name="Quail M.A."/>
            <person name="Urushihara H."/>
            <person name="Hernandez J."/>
            <person name="Rabbinowitsch E."/>
            <person name="Steffen D."/>
            <person name="Sanders M."/>
            <person name="Ma J."/>
            <person name="Kohara Y."/>
            <person name="Sharp S."/>
            <person name="Simmonds M.N."/>
            <person name="Spiegler S."/>
            <person name="Tivey A."/>
            <person name="Sugano S."/>
            <person name="White B."/>
            <person name="Walker D."/>
            <person name="Woodward J.R."/>
            <person name="Winckler T."/>
            <person name="Tanaka Y."/>
            <person name="Shaulsky G."/>
            <person name="Schleicher M."/>
            <person name="Weinstock G.M."/>
            <person name="Rosenthal A."/>
            <person name="Cox E.C."/>
            <person name="Chisholm R.L."/>
            <person name="Gibbs R.A."/>
            <person name="Loomis W.F."/>
            <person name="Platzer M."/>
            <person name="Kay R.R."/>
            <person name="Williams J.G."/>
            <person name="Dear P.H."/>
            <person name="Noegel A.A."/>
            <person name="Barrell B.G."/>
            <person name="Kuspa A."/>
        </authorList>
    </citation>
    <scope>NUCLEOTIDE SEQUENCE [LARGE SCALE GENOMIC DNA]</scope>
    <source>
        <strain>AX4</strain>
    </source>
</reference>
<feature type="chain" id="PRO_0000352421" description="Putative uncharacterized protein DDB_G0281733">
    <location>
        <begin position="1"/>
        <end position="831"/>
    </location>
</feature>
<feature type="domain" description="CID" evidence="1">
    <location>
        <begin position="1"/>
        <end position="146"/>
    </location>
</feature>
<feature type="region of interest" description="Disordered" evidence="2">
    <location>
        <begin position="205"/>
        <end position="233"/>
    </location>
</feature>
<feature type="region of interest" description="Disordered" evidence="2">
    <location>
        <begin position="265"/>
        <end position="354"/>
    </location>
</feature>
<feature type="region of interest" description="Disordered" evidence="2">
    <location>
        <begin position="434"/>
        <end position="480"/>
    </location>
</feature>
<feature type="region of interest" description="Disordered" evidence="2">
    <location>
        <begin position="572"/>
        <end position="831"/>
    </location>
</feature>
<feature type="compositionally biased region" description="Low complexity" evidence="2">
    <location>
        <begin position="272"/>
        <end position="354"/>
    </location>
</feature>
<feature type="compositionally biased region" description="Low complexity" evidence="2">
    <location>
        <begin position="434"/>
        <end position="477"/>
    </location>
</feature>
<feature type="compositionally biased region" description="Basic and acidic residues" evidence="2">
    <location>
        <begin position="592"/>
        <end position="601"/>
    </location>
</feature>
<feature type="compositionally biased region" description="Basic and acidic residues" evidence="2">
    <location>
        <begin position="611"/>
        <end position="813"/>
    </location>
</feature>
<feature type="compositionally biased region" description="Low complexity" evidence="2">
    <location>
        <begin position="817"/>
        <end position="831"/>
    </location>
</feature>